<name>Y633_STRA5</name>
<evidence type="ECO:0000255" key="1">
    <source>
        <dbReference type="PROSITE-ProRule" id="PRU00208"/>
    </source>
</evidence>
<evidence type="ECO:0000255" key="2">
    <source>
        <dbReference type="PROSITE-ProRule" id="PRU01024"/>
    </source>
</evidence>
<comment type="similarity">
    <text evidence="2">Belongs to the class I-like SAM-binding methyltransferase superfamily. RNA M5U methyltransferase family.</text>
</comment>
<gene>
    <name type="ordered locus">SAG0633</name>
</gene>
<protein>
    <recommendedName>
        <fullName>Uncharacterized RNA methyltransferase SAG0633</fullName>
        <ecNumber>2.1.1.-</ecNumber>
    </recommendedName>
</protein>
<keyword id="KW-0489">Methyltransferase</keyword>
<keyword id="KW-1185">Reference proteome</keyword>
<keyword id="KW-0949">S-adenosyl-L-methionine</keyword>
<keyword id="KW-0808">Transferase</keyword>
<organism>
    <name type="scientific">Streptococcus agalactiae serotype V (strain ATCC BAA-611 / 2603 V/R)</name>
    <dbReference type="NCBI Taxonomy" id="208435"/>
    <lineage>
        <taxon>Bacteria</taxon>
        <taxon>Bacillati</taxon>
        <taxon>Bacillota</taxon>
        <taxon>Bacilli</taxon>
        <taxon>Lactobacillales</taxon>
        <taxon>Streptococcaceae</taxon>
        <taxon>Streptococcus</taxon>
    </lineage>
</organism>
<proteinExistence type="inferred from homology"/>
<accession>Q8E0T7</accession>
<reference key="1">
    <citation type="journal article" date="2002" name="Proc. Natl. Acad. Sci. U.S.A.">
        <title>Complete genome sequence and comparative genomic analysis of an emerging human pathogen, serotype V Streptococcus agalactiae.</title>
        <authorList>
            <person name="Tettelin H."/>
            <person name="Masignani V."/>
            <person name="Cieslewicz M.J."/>
            <person name="Eisen J.A."/>
            <person name="Peterson S.N."/>
            <person name="Wessels M.R."/>
            <person name="Paulsen I.T."/>
            <person name="Nelson K.E."/>
            <person name="Margarit I."/>
            <person name="Read T.D."/>
            <person name="Madoff L.C."/>
            <person name="Wolf A.M."/>
            <person name="Beanan M.J."/>
            <person name="Brinkac L.M."/>
            <person name="Daugherty S.C."/>
            <person name="DeBoy R.T."/>
            <person name="Durkin A.S."/>
            <person name="Kolonay J.F."/>
            <person name="Madupu R."/>
            <person name="Lewis M.R."/>
            <person name="Radune D."/>
            <person name="Fedorova N.B."/>
            <person name="Scanlan D."/>
            <person name="Khouri H.M."/>
            <person name="Mulligan S."/>
            <person name="Carty H.A."/>
            <person name="Cline R.T."/>
            <person name="Van Aken S.E."/>
            <person name="Gill J."/>
            <person name="Scarselli M."/>
            <person name="Mora M."/>
            <person name="Iacobini E.T."/>
            <person name="Brettoni C."/>
            <person name="Galli G."/>
            <person name="Mariani M."/>
            <person name="Vegni F."/>
            <person name="Maione D."/>
            <person name="Rinaudo D."/>
            <person name="Rappuoli R."/>
            <person name="Telford J.L."/>
            <person name="Kasper D.L."/>
            <person name="Grandi G."/>
            <person name="Fraser C.M."/>
        </authorList>
    </citation>
    <scope>NUCLEOTIDE SEQUENCE [LARGE SCALE GENOMIC DNA]</scope>
    <source>
        <strain>ATCC BAA-611 / 2603 V/R</strain>
    </source>
</reference>
<feature type="chain" id="PRO_0000162026" description="Uncharacterized RNA methyltransferase SAG0633">
    <location>
        <begin position="1"/>
        <end position="451"/>
    </location>
</feature>
<feature type="domain" description="TRAM" evidence="1">
    <location>
        <begin position="1"/>
        <end position="59"/>
    </location>
</feature>
<feature type="active site" description="Nucleophile" evidence="2">
    <location>
        <position position="408"/>
    </location>
</feature>
<feature type="binding site" evidence="2">
    <location>
        <position position="283"/>
    </location>
    <ligand>
        <name>S-adenosyl-L-methionine</name>
        <dbReference type="ChEBI" id="CHEBI:59789"/>
    </ligand>
</feature>
<feature type="binding site" evidence="2">
    <location>
        <position position="312"/>
    </location>
    <ligand>
        <name>S-adenosyl-L-methionine</name>
        <dbReference type="ChEBI" id="CHEBI:59789"/>
    </ligand>
</feature>
<feature type="binding site" evidence="2">
    <location>
        <position position="333"/>
    </location>
    <ligand>
        <name>S-adenosyl-L-methionine</name>
        <dbReference type="ChEBI" id="CHEBI:59789"/>
    </ligand>
</feature>
<feature type="binding site" evidence="2">
    <location>
        <position position="381"/>
    </location>
    <ligand>
        <name>S-adenosyl-L-methionine</name>
        <dbReference type="ChEBI" id="CHEBI:59789"/>
    </ligand>
</feature>
<sequence length="451" mass="50993">MLHKNDIIETEISDISHEGMGIAKVDGFVFFVENALPGEIIKMRVLKLRKRIGYGKVEEYLTTSPHRNEGLDYTYLRTGIADLGHLTYEQQLLFKQKQVADNLYKIAHISDVLVEPTLGMTIPLAYRNKAQVPVRRVDGQLETGFFRKNSHTLVSIEDYLIQEKEIDALINFTRDLLRKFDVKPYDEEQQSGLIRNLVVRRGHYTGQLMLVLVTTRPKIFRIDQMIEKLVSAFPSVVSIMQNINDRNSNVIFGKEFRTLYGSDTIEDQMLGNTYAISAQSFYQVNTEMAEKLYQKAIDFSDLNSEDIVIDAYSGIGTIGLSVAKQVKHVYGVEVVEKAVSDAKENATRNGITNSTYVADSAENAMAKWLKEGIKPTVIMVDPPRKGLTESFVYSAAQTKADKITYISCNSATMARDIKLFEELGYHLVKIQPVDLFPMTHHVECVALLVKA</sequence>
<dbReference type="EC" id="2.1.1.-"/>
<dbReference type="EMBL" id="AE009948">
    <property type="protein sequence ID" value="AAM99529.1"/>
    <property type="molecule type" value="Genomic_DNA"/>
</dbReference>
<dbReference type="RefSeq" id="NP_687657.1">
    <property type="nucleotide sequence ID" value="NC_004116.1"/>
</dbReference>
<dbReference type="RefSeq" id="WP_000902654.1">
    <property type="nucleotide sequence ID" value="NC_004116.1"/>
</dbReference>
<dbReference type="SMR" id="Q8E0T7"/>
<dbReference type="STRING" id="208435.SAG0633"/>
<dbReference type="GeneID" id="66885546"/>
<dbReference type="KEGG" id="sag:SAG0633"/>
<dbReference type="PATRIC" id="fig|208435.3.peg.633"/>
<dbReference type="HOGENOM" id="CLU_014689_7_0_9"/>
<dbReference type="OrthoDB" id="9804590at2"/>
<dbReference type="Proteomes" id="UP000000821">
    <property type="component" value="Chromosome"/>
</dbReference>
<dbReference type="GO" id="GO:0070041">
    <property type="term" value="F:rRNA (uridine-C5-)-methyltransferase activity"/>
    <property type="evidence" value="ECO:0007669"/>
    <property type="project" value="TreeGrafter"/>
</dbReference>
<dbReference type="GO" id="GO:0070475">
    <property type="term" value="P:rRNA base methylation"/>
    <property type="evidence" value="ECO:0007669"/>
    <property type="project" value="TreeGrafter"/>
</dbReference>
<dbReference type="CDD" id="cd02440">
    <property type="entry name" value="AdoMet_MTases"/>
    <property type="match status" value="1"/>
</dbReference>
<dbReference type="FunFam" id="3.40.50.150:FF:000009">
    <property type="entry name" value="23S rRNA (Uracil(1939)-C(5))-methyltransferase RlmD"/>
    <property type="match status" value="1"/>
</dbReference>
<dbReference type="FunFam" id="2.40.50.1070:FF:000003">
    <property type="entry name" value="23S rRNA (Uracil-5-)-methyltransferase RumA"/>
    <property type="match status" value="1"/>
</dbReference>
<dbReference type="Gene3D" id="2.40.50.1070">
    <property type="match status" value="1"/>
</dbReference>
<dbReference type="Gene3D" id="2.40.50.140">
    <property type="entry name" value="Nucleic acid-binding proteins"/>
    <property type="match status" value="1"/>
</dbReference>
<dbReference type="Gene3D" id="3.40.50.150">
    <property type="entry name" value="Vaccinia Virus protein VP39"/>
    <property type="match status" value="1"/>
</dbReference>
<dbReference type="InterPro" id="IPR030390">
    <property type="entry name" value="MeTrfase_TrmA_AS"/>
</dbReference>
<dbReference type="InterPro" id="IPR030391">
    <property type="entry name" value="MeTrfase_TrmA_CS"/>
</dbReference>
<dbReference type="InterPro" id="IPR012340">
    <property type="entry name" value="NA-bd_OB-fold"/>
</dbReference>
<dbReference type="InterPro" id="IPR029063">
    <property type="entry name" value="SAM-dependent_MTases_sf"/>
</dbReference>
<dbReference type="InterPro" id="IPR002792">
    <property type="entry name" value="TRAM_dom"/>
</dbReference>
<dbReference type="InterPro" id="IPR010280">
    <property type="entry name" value="U5_MeTrfase_fam"/>
</dbReference>
<dbReference type="NCBIfam" id="TIGR00479">
    <property type="entry name" value="rumA"/>
    <property type="match status" value="1"/>
</dbReference>
<dbReference type="PANTHER" id="PTHR11061">
    <property type="entry name" value="RNA M5U METHYLTRANSFERASE"/>
    <property type="match status" value="1"/>
</dbReference>
<dbReference type="PANTHER" id="PTHR11061:SF30">
    <property type="entry name" value="TRNA (URACIL(54)-C(5))-METHYLTRANSFERASE"/>
    <property type="match status" value="1"/>
</dbReference>
<dbReference type="Pfam" id="PF01938">
    <property type="entry name" value="TRAM"/>
    <property type="match status" value="1"/>
</dbReference>
<dbReference type="Pfam" id="PF05958">
    <property type="entry name" value="tRNA_U5-meth_tr"/>
    <property type="match status" value="1"/>
</dbReference>
<dbReference type="SUPFAM" id="SSF50249">
    <property type="entry name" value="Nucleic acid-binding proteins"/>
    <property type="match status" value="1"/>
</dbReference>
<dbReference type="SUPFAM" id="SSF53335">
    <property type="entry name" value="S-adenosyl-L-methionine-dependent methyltransferases"/>
    <property type="match status" value="1"/>
</dbReference>
<dbReference type="PROSITE" id="PS51687">
    <property type="entry name" value="SAM_MT_RNA_M5U"/>
    <property type="match status" value="1"/>
</dbReference>
<dbReference type="PROSITE" id="PS50926">
    <property type="entry name" value="TRAM"/>
    <property type="match status" value="1"/>
</dbReference>
<dbReference type="PROSITE" id="PS01230">
    <property type="entry name" value="TRMA_1"/>
    <property type="match status" value="1"/>
</dbReference>
<dbReference type="PROSITE" id="PS01231">
    <property type="entry name" value="TRMA_2"/>
    <property type="match status" value="1"/>
</dbReference>